<dbReference type="EMBL" id="AE000657">
    <property type="protein sequence ID" value="AAC07655.1"/>
    <property type="molecule type" value="Genomic_DNA"/>
</dbReference>
<dbReference type="EMBL" id="AE000657">
    <property type="protein sequence ID" value="AAC06910.1"/>
    <property type="molecule type" value="Genomic_DNA"/>
</dbReference>
<dbReference type="PIR" id="H70457">
    <property type="entry name" value="H70457"/>
</dbReference>
<dbReference type="RefSeq" id="NP_213505.1">
    <property type="nucleotide sequence ID" value="NC_000918.1"/>
</dbReference>
<dbReference type="RefSeq" id="NP_214257.1">
    <property type="nucleotide sequence ID" value="NC_000918.1"/>
</dbReference>
<dbReference type="RefSeq" id="WP_010880443.1">
    <property type="nucleotide sequence ID" value="NC_000918.1"/>
</dbReference>
<dbReference type="SMR" id="O70089"/>
<dbReference type="FunCoup" id="O70089">
    <property type="interactions" value="442"/>
</dbReference>
<dbReference type="STRING" id="224324.aq_1834"/>
<dbReference type="EnsemblBacteria" id="AAC06910">
    <property type="protein sequence ID" value="AAC06910"/>
    <property type="gene ID" value="aq_735"/>
</dbReference>
<dbReference type="EnsemblBacteria" id="AAC07655">
    <property type="protein sequence ID" value="AAC07655"/>
    <property type="gene ID" value="aq_1834"/>
</dbReference>
<dbReference type="KEGG" id="aae:aq_1834"/>
<dbReference type="KEGG" id="aae:aq_735"/>
<dbReference type="PATRIC" id="fig|224324.8.peg.1415"/>
<dbReference type="eggNOG" id="COG0048">
    <property type="taxonomic scope" value="Bacteria"/>
</dbReference>
<dbReference type="HOGENOM" id="CLU_104295_1_2_0"/>
<dbReference type="InParanoid" id="O70089"/>
<dbReference type="OrthoDB" id="9802366at2"/>
<dbReference type="Proteomes" id="UP000000798">
    <property type="component" value="Chromosome"/>
</dbReference>
<dbReference type="GO" id="GO:0005840">
    <property type="term" value="C:ribosome"/>
    <property type="evidence" value="ECO:0000318"/>
    <property type="project" value="GO_Central"/>
</dbReference>
<dbReference type="GO" id="GO:0015935">
    <property type="term" value="C:small ribosomal subunit"/>
    <property type="evidence" value="ECO:0007669"/>
    <property type="project" value="InterPro"/>
</dbReference>
<dbReference type="GO" id="GO:0019843">
    <property type="term" value="F:rRNA binding"/>
    <property type="evidence" value="ECO:0007669"/>
    <property type="project" value="UniProtKB-UniRule"/>
</dbReference>
<dbReference type="GO" id="GO:0003735">
    <property type="term" value="F:structural constituent of ribosome"/>
    <property type="evidence" value="ECO:0000318"/>
    <property type="project" value="GO_Central"/>
</dbReference>
<dbReference type="GO" id="GO:0000049">
    <property type="term" value="F:tRNA binding"/>
    <property type="evidence" value="ECO:0007669"/>
    <property type="project" value="UniProtKB-UniRule"/>
</dbReference>
<dbReference type="GO" id="GO:0006412">
    <property type="term" value="P:translation"/>
    <property type="evidence" value="ECO:0000318"/>
    <property type="project" value="GO_Central"/>
</dbReference>
<dbReference type="CDD" id="cd03368">
    <property type="entry name" value="Ribosomal_S12"/>
    <property type="match status" value="1"/>
</dbReference>
<dbReference type="FunFam" id="2.40.50.140:FF:000001">
    <property type="entry name" value="30S ribosomal protein S12"/>
    <property type="match status" value="1"/>
</dbReference>
<dbReference type="Gene3D" id="2.40.50.140">
    <property type="entry name" value="Nucleic acid-binding proteins"/>
    <property type="match status" value="1"/>
</dbReference>
<dbReference type="HAMAP" id="MF_00403_B">
    <property type="entry name" value="Ribosomal_uS12_B"/>
    <property type="match status" value="1"/>
</dbReference>
<dbReference type="InterPro" id="IPR012340">
    <property type="entry name" value="NA-bd_OB-fold"/>
</dbReference>
<dbReference type="InterPro" id="IPR006032">
    <property type="entry name" value="Ribosomal_uS12"/>
</dbReference>
<dbReference type="InterPro" id="IPR005679">
    <property type="entry name" value="Ribosomal_uS12_bac"/>
</dbReference>
<dbReference type="NCBIfam" id="TIGR00981">
    <property type="entry name" value="rpsL_bact"/>
    <property type="match status" value="1"/>
</dbReference>
<dbReference type="PANTHER" id="PTHR11652">
    <property type="entry name" value="30S RIBOSOMAL PROTEIN S12 FAMILY MEMBER"/>
    <property type="match status" value="1"/>
</dbReference>
<dbReference type="Pfam" id="PF00164">
    <property type="entry name" value="Ribosom_S12_S23"/>
    <property type="match status" value="1"/>
</dbReference>
<dbReference type="PIRSF" id="PIRSF002133">
    <property type="entry name" value="Ribosomal_S12/S23"/>
    <property type="match status" value="1"/>
</dbReference>
<dbReference type="PRINTS" id="PR01034">
    <property type="entry name" value="RIBOSOMALS12"/>
</dbReference>
<dbReference type="SUPFAM" id="SSF50249">
    <property type="entry name" value="Nucleic acid-binding proteins"/>
    <property type="match status" value="1"/>
</dbReference>
<dbReference type="PROSITE" id="PS00055">
    <property type="entry name" value="RIBOSOMAL_S12"/>
    <property type="match status" value="1"/>
</dbReference>
<comment type="function">
    <text evidence="2">With S4 and S5 plays an important role in translational accuracy.</text>
</comment>
<comment type="function">
    <text evidence="2">Interacts with and stabilizes bases of the 16S rRNA that are involved in tRNA selection in the A site and with the mRNA backbone. Located at the interface of the 30S and 50S subunits, it traverses the body of the 30S subunit contacting proteins on the other side and probably holding the rRNA structure together. The combined cluster of proteins S8, S12 and S17 appears to hold together the shoulder and platform of the 30S subunit.</text>
</comment>
<comment type="subunit">
    <text evidence="2">Part of the 30S ribosomal subunit. Contacts proteins S8 and S17. May interact with IF1 in the 30S initiation complex.</text>
</comment>
<comment type="similarity">
    <text evidence="2">Belongs to the universal ribosomal protein uS12 family.</text>
</comment>
<name>RS12_AQUAE</name>
<accession>O70089</accession>
<evidence type="ECO:0000250" key="1"/>
<evidence type="ECO:0000255" key="2">
    <source>
        <dbReference type="HAMAP-Rule" id="MF_00403"/>
    </source>
</evidence>
<evidence type="ECO:0000256" key="3">
    <source>
        <dbReference type="SAM" id="MobiDB-lite"/>
    </source>
</evidence>
<evidence type="ECO:0000305" key="4"/>
<protein>
    <recommendedName>
        <fullName evidence="2">Small ribosomal subunit protein uS12</fullName>
    </recommendedName>
    <alternativeName>
        <fullName evidence="4">30S ribosomal protein S12</fullName>
    </alternativeName>
</protein>
<proteinExistence type="inferred from homology"/>
<organism>
    <name type="scientific">Aquifex aeolicus (strain VF5)</name>
    <dbReference type="NCBI Taxonomy" id="224324"/>
    <lineage>
        <taxon>Bacteria</taxon>
        <taxon>Pseudomonadati</taxon>
        <taxon>Aquificota</taxon>
        <taxon>Aquificia</taxon>
        <taxon>Aquificales</taxon>
        <taxon>Aquificaceae</taxon>
        <taxon>Aquifex</taxon>
    </lineage>
</organism>
<sequence>MPTFNQLVKYGREKRKKKSKAPALQGCPQKRGVCVRVYTVTPKKPNSALRKVARVRLSNGIEVTAYIPGEGHNLQEHSIVLVRGGRVKDLPGVRYKIIRGALDAAGVEGRRQSRSKYGTKRPKEEKGG</sequence>
<keyword id="KW-0488">Methylation</keyword>
<keyword id="KW-1185">Reference proteome</keyword>
<keyword id="KW-0687">Ribonucleoprotein</keyword>
<keyword id="KW-0689">Ribosomal protein</keyword>
<keyword id="KW-0694">RNA-binding</keyword>
<keyword id="KW-0699">rRNA-binding</keyword>
<keyword id="KW-0820">tRNA-binding</keyword>
<gene>
    <name evidence="2" type="primary">rpsL1</name>
    <name type="ordered locus">aq_1834</name>
</gene>
<gene>
    <name evidence="2" type="primary">rpsL2</name>
    <name type="ordered locus">aq_735</name>
</gene>
<reference key="1">
    <citation type="journal article" date="1998" name="Nature">
        <title>The complete genome of the hyperthermophilic bacterium Aquifex aeolicus.</title>
        <authorList>
            <person name="Deckert G."/>
            <person name="Warren P.V."/>
            <person name="Gaasterland T."/>
            <person name="Young W.G."/>
            <person name="Lenox A.L."/>
            <person name="Graham D.E."/>
            <person name="Overbeek R."/>
            <person name="Snead M.A."/>
            <person name="Keller M."/>
            <person name="Aujay M."/>
            <person name="Huber R."/>
            <person name="Feldman R.A."/>
            <person name="Short J.M."/>
            <person name="Olsen G.J."/>
            <person name="Swanson R.V."/>
        </authorList>
    </citation>
    <scope>NUCLEOTIDE SEQUENCE [LARGE SCALE GENOMIC DNA]</scope>
    <source>
        <strain>VF5</strain>
    </source>
</reference>
<feature type="chain" id="PRO_0000146166" description="Small ribosomal subunit protein uS12">
    <location>
        <begin position="1"/>
        <end position="128"/>
    </location>
</feature>
<feature type="region of interest" description="Disordered" evidence="3">
    <location>
        <begin position="1"/>
        <end position="24"/>
    </location>
</feature>
<feature type="region of interest" description="Disordered" evidence="3">
    <location>
        <begin position="105"/>
        <end position="128"/>
    </location>
</feature>
<feature type="modified residue" description="3-methylthioaspartic acid" evidence="1">
    <location>
        <position position="89"/>
    </location>
</feature>